<accession>Q5R108</accession>
<proteinExistence type="inferred from homology"/>
<dbReference type="EMBL" id="AE017340">
    <property type="protein sequence ID" value="AAV81648.1"/>
    <property type="molecule type" value="Genomic_DNA"/>
</dbReference>
<dbReference type="RefSeq" id="WP_011234059.1">
    <property type="nucleotide sequence ID" value="NC_006512.1"/>
</dbReference>
<dbReference type="SMR" id="Q5R108"/>
<dbReference type="STRING" id="283942.IL0808"/>
<dbReference type="GeneID" id="41335963"/>
<dbReference type="KEGG" id="ilo:IL0808"/>
<dbReference type="eggNOG" id="COG1381">
    <property type="taxonomic scope" value="Bacteria"/>
</dbReference>
<dbReference type="HOGENOM" id="CLU_066645_1_0_6"/>
<dbReference type="OrthoDB" id="9804792at2"/>
<dbReference type="Proteomes" id="UP000001171">
    <property type="component" value="Chromosome"/>
</dbReference>
<dbReference type="GO" id="GO:0043590">
    <property type="term" value="C:bacterial nucleoid"/>
    <property type="evidence" value="ECO:0007669"/>
    <property type="project" value="TreeGrafter"/>
</dbReference>
<dbReference type="GO" id="GO:0006310">
    <property type="term" value="P:DNA recombination"/>
    <property type="evidence" value="ECO:0007669"/>
    <property type="project" value="UniProtKB-UniRule"/>
</dbReference>
<dbReference type="GO" id="GO:0006302">
    <property type="term" value="P:double-strand break repair"/>
    <property type="evidence" value="ECO:0007669"/>
    <property type="project" value="TreeGrafter"/>
</dbReference>
<dbReference type="Gene3D" id="2.40.50.140">
    <property type="entry name" value="Nucleic acid-binding proteins"/>
    <property type="match status" value="1"/>
</dbReference>
<dbReference type="Gene3D" id="1.20.1440.120">
    <property type="entry name" value="Recombination protein O, C-terminal domain"/>
    <property type="match status" value="1"/>
</dbReference>
<dbReference type="HAMAP" id="MF_00201">
    <property type="entry name" value="RecO"/>
    <property type="match status" value="1"/>
</dbReference>
<dbReference type="InterPro" id="IPR037278">
    <property type="entry name" value="ARFGAP/RecO"/>
</dbReference>
<dbReference type="InterPro" id="IPR022572">
    <property type="entry name" value="DNA_rep/recomb_RecO_N"/>
</dbReference>
<dbReference type="InterPro" id="IPR012340">
    <property type="entry name" value="NA-bd_OB-fold"/>
</dbReference>
<dbReference type="InterPro" id="IPR003717">
    <property type="entry name" value="RecO"/>
</dbReference>
<dbReference type="InterPro" id="IPR042242">
    <property type="entry name" value="RecO_C"/>
</dbReference>
<dbReference type="NCBIfam" id="TIGR00613">
    <property type="entry name" value="reco"/>
    <property type="match status" value="1"/>
</dbReference>
<dbReference type="PANTHER" id="PTHR33991">
    <property type="entry name" value="DNA REPAIR PROTEIN RECO"/>
    <property type="match status" value="1"/>
</dbReference>
<dbReference type="PANTHER" id="PTHR33991:SF1">
    <property type="entry name" value="DNA REPAIR PROTEIN RECO"/>
    <property type="match status" value="1"/>
</dbReference>
<dbReference type="Pfam" id="PF02565">
    <property type="entry name" value="RecO_C"/>
    <property type="match status" value="1"/>
</dbReference>
<dbReference type="Pfam" id="PF11967">
    <property type="entry name" value="RecO_N"/>
    <property type="match status" value="1"/>
</dbReference>
<dbReference type="SUPFAM" id="SSF57863">
    <property type="entry name" value="ArfGap/RecO-like zinc finger"/>
    <property type="match status" value="1"/>
</dbReference>
<dbReference type="SUPFAM" id="SSF50249">
    <property type="entry name" value="Nucleic acid-binding proteins"/>
    <property type="match status" value="1"/>
</dbReference>
<reference key="1">
    <citation type="journal article" date="2004" name="Proc. Natl. Acad. Sci. U.S.A.">
        <title>Genome sequence of the deep-sea gamma-proteobacterium Idiomarina loihiensis reveals amino acid fermentation as a source of carbon and energy.</title>
        <authorList>
            <person name="Hou S."/>
            <person name="Saw J.H."/>
            <person name="Lee K.S."/>
            <person name="Freitas T.A."/>
            <person name="Belisle C."/>
            <person name="Kawarabayasi Y."/>
            <person name="Donachie S.P."/>
            <person name="Pikina A."/>
            <person name="Galperin M.Y."/>
            <person name="Koonin E.V."/>
            <person name="Makarova K.S."/>
            <person name="Omelchenko M.V."/>
            <person name="Sorokin A."/>
            <person name="Wolf Y.I."/>
            <person name="Li Q.X."/>
            <person name="Keum Y.S."/>
            <person name="Campbell S."/>
            <person name="Denery J."/>
            <person name="Aizawa S."/>
            <person name="Shibata S."/>
            <person name="Malahoff A."/>
            <person name="Alam M."/>
        </authorList>
    </citation>
    <scope>NUCLEOTIDE SEQUENCE [LARGE SCALE GENOMIC DNA]</scope>
    <source>
        <strain>ATCC BAA-735 / DSM 15497 / L2-TR</strain>
    </source>
</reference>
<organism>
    <name type="scientific">Idiomarina loihiensis (strain ATCC BAA-735 / DSM 15497 / L2-TR)</name>
    <dbReference type="NCBI Taxonomy" id="283942"/>
    <lineage>
        <taxon>Bacteria</taxon>
        <taxon>Pseudomonadati</taxon>
        <taxon>Pseudomonadota</taxon>
        <taxon>Gammaproteobacteria</taxon>
        <taxon>Alteromonadales</taxon>
        <taxon>Idiomarinaceae</taxon>
        <taxon>Idiomarina</taxon>
    </lineage>
</organism>
<keyword id="KW-0227">DNA damage</keyword>
<keyword id="KW-0233">DNA recombination</keyword>
<keyword id="KW-0234">DNA repair</keyword>
<keyword id="KW-1185">Reference proteome</keyword>
<evidence type="ECO:0000255" key="1">
    <source>
        <dbReference type="HAMAP-Rule" id="MF_00201"/>
    </source>
</evidence>
<sequence length="234" mass="27220">MAQRALVLHRWDYQETSLILDLFTEDKGRVRVVAKGAKRPKSPWRGLAQPFMPLLAEFQGRSDLKTLTLLEPQQTTQKLLLQGDKLYSGFYLNELIQRLVPTEAEAPELFESYLSALQNMTNSERVEPALRQFEWQLLQHLGAAFDWHYDADTGNVLSDSKWCYFIPDHGFVTQARDNQQRAYSVADIQKLAAWDVDDENRLRLLKYIMRDALAVYLGDKPLRSRELFRGTKRQ</sequence>
<name>RECO_IDILO</name>
<feature type="chain" id="PRO_0000204959" description="DNA repair protein RecO">
    <location>
        <begin position="1"/>
        <end position="234"/>
    </location>
</feature>
<protein>
    <recommendedName>
        <fullName evidence="1">DNA repair protein RecO</fullName>
    </recommendedName>
    <alternativeName>
        <fullName evidence="1">Recombination protein O</fullName>
    </alternativeName>
</protein>
<gene>
    <name evidence="1" type="primary">recO</name>
    <name type="ordered locus">IL0808</name>
</gene>
<comment type="function">
    <text evidence="1">Involved in DNA repair and RecF pathway recombination.</text>
</comment>
<comment type="similarity">
    <text evidence="1">Belongs to the RecO family.</text>
</comment>